<dbReference type="EMBL" id="CP000686">
    <property type="protein sequence ID" value="ABQ89566.1"/>
    <property type="molecule type" value="Genomic_DNA"/>
</dbReference>
<dbReference type="RefSeq" id="WP_011955919.1">
    <property type="nucleotide sequence ID" value="NC_009523.1"/>
</dbReference>
<dbReference type="SMR" id="A5USG3"/>
<dbReference type="STRING" id="357808.RoseRS_1159"/>
<dbReference type="KEGG" id="rrs:RoseRS_1159"/>
<dbReference type="eggNOG" id="COG0522">
    <property type="taxonomic scope" value="Bacteria"/>
</dbReference>
<dbReference type="HOGENOM" id="CLU_092403_0_2_0"/>
<dbReference type="OrthoDB" id="9803672at2"/>
<dbReference type="Proteomes" id="UP000006554">
    <property type="component" value="Chromosome"/>
</dbReference>
<dbReference type="GO" id="GO:0015935">
    <property type="term" value="C:small ribosomal subunit"/>
    <property type="evidence" value="ECO:0007669"/>
    <property type="project" value="InterPro"/>
</dbReference>
<dbReference type="GO" id="GO:0019843">
    <property type="term" value="F:rRNA binding"/>
    <property type="evidence" value="ECO:0007669"/>
    <property type="project" value="UniProtKB-UniRule"/>
</dbReference>
<dbReference type="GO" id="GO:0003735">
    <property type="term" value="F:structural constituent of ribosome"/>
    <property type="evidence" value="ECO:0007669"/>
    <property type="project" value="InterPro"/>
</dbReference>
<dbReference type="GO" id="GO:0042274">
    <property type="term" value="P:ribosomal small subunit biogenesis"/>
    <property type="evidence" value="ECO:0007669"/>
    <property type="project" value="TreeGrafter"/>
</dbReference>
<dbReference type="GO" id="GO:0006412">
    <property type="term" value="P:translation"/>
    <property type="evidence" value="ECO:0007669"/>
    <property type="project" value="UniProtKB-UniRule"/>
</dbReference>
<dbReference type="CDD" id="cd00165">
    <property type="entry name" value="S4"/>
    <property type="match status" value="1"/>
</dbReference>
<dbReference type="FunFam" id="3.10.290.10:FF:000001">
    <property type="entry name" value="30S ribosomal protein S4"/>
    <property type="match status" value="1"/>
</dbReference>
<dbReference type="Gene3D" id="1.10.1050.10">
    <property type="entry name" value="Ribosomal Protein S4 Delta 41, Chain A, domain 1"/>
    <property type="match status" value="1"/>
</dbReference>
<dbReference type="Gene3D" id="3.10.290.10">
    <property type="entry name" value="RNA-binding S4 domain"/>
    <property type="match status" value="1"/>
</dbReference>
<dbReference type="HAMAP" id="MF_01306_B">
    <property type="entry name" value="Ribosomal_uS4_B"/>
    <property type="match status" value="1"/>
</dbReference>
<dbReference type="InterPro" id="IPR022801">
    <property type="entry name" value="Ribosomal_uS4"/>
</dbReference>
<dbReference type="InterPro" id="IPR005709">
    <property type="entry name" value="Ribosomal_uS4_bac-type"/>
</dbReference>
<dbReference type="InterPro" id="IPR018079">
    <property type="entry name" value="Ribosomal_uS4_CS"/>
</dbReference>
<dbReference type="InterPro" id="IPR001912">
    <property type="entry name" value="Ribosomal_uS4_N"/>
</dbReference>
<dbReference type="InterPro" id="IPR002942">
    <property type="entry name" value="S4_RNA-bd"/>
</dbReference>
<dbReference type="InterPro" id="IPR036986">
    <property type="entry name" value="S4_RNA-bd_sf"/>
</dbReference>
<dbReference type="NCBIfam" id="NF003717">
    <property type="entry name" value="PRK05327.1"/>
    <property type="match status" value="1"/>
</dbReference>
<dbReference type="NCBIfam" id="TIGR01017">
    <property type="entry name" value="rpsD_bact"/>
    <property type="match status" value="1"/>
</dbReference>
<dbReference type="PANTHER" id="PTHR11831">
    <property type="entry name" value="30S 40S RIBOSOMAL PROTEIN"/>
    <property type="match status" value="1"/>
</dbReference>
<dbReference type="PANTHER" id="PTHR11831:SF4">
    <property type="entry name" value="SMALL RIBOSOMAL SUBUNIT PROTEIN US4M"/>
    <property type="match status" value="1"/>
</dbReference>
<dbReference type="Pfam" id="PF00163">
    <property type="entry name" value="Ribosomal_S4"/>
    <property type="match status" value="1"/>
</dbReference>
<dbReference type="Pfam" id="PF01479">
    <property type="entry name" value="S4"/>
    <property type="match status" value="1"/>
</dbReference>
<dbReference type="SMART" id="SM01390">
    <property type="entry name" value="Ribosomal_S4"/>
    <property type="match status" value="1"/>
</dbReference>
<dbReference type="SMART" id="SM00363">
    <property type="entry name" value="S4"/>
    <property type="match status" value="1"/>
</dbReference>
<dbReference type="SUPFAM" id="SSF55174">
    <property type="entry name" value="Alpha-L RNA-binding motif"/>
    <property type="match status" value="1"/>
</dbReference>
<dbReference type="PROSITE" id="PS00632">
    <property type="entry name" value="RIBOSOMAL_S4"/>
    <property type="match status" value="1"/>
</dbReference>
<dbReference type="PROSITE" id="PS50889">
    <property type="entry name" value="S4"/>
    <property type="match status" value="1"/>
</dbReference>
<protein>
    <recommendedName>
        <fullName evidence="1">Small ribosomal subunit protein uS4</fullName>
    </recommendedName>
    <alternativeName>
        <fullName evidence="2">30S ribosomal protein S4</fullName>
    </alternativeName>
</protein>
<reference key="1">
    <citation type="submission" date="2007-04" db="EMBL/GenBank/DDBJ databases">
        <title>Complete sequence of Roseiflexus sp. RS-1.</title>
        <authorList>
            <consortium name="US DOE Joint Genome Institute"/>
            <person name="Copeland A."/>
            <person name="Lucas S."/>
            <person name="Lapidus A."/>
            <person name="Barry K."/>
            <person name="Detter J.C."/>
            <person name="Glavina del Rio T."/>
            <person name="Hammon N."/>
            <person name="Israni S."/>
            <person name="Dalin E."/>
            <person name="Tice H."/>
            <person name="Pitluck S."/>
            <person name="Chertkov O."/>
            <person name="Brettin T."/>
            <person name="Bruce D."/>
            <person name="Han C."/>
            <person name="Schmutz J."/>
            <person name="Larimer F."/>
            <person name="Land M."/>
            <person name="Hauser L."/>
            <person name="Kyrpides N."/>
            <person name="Mikhailova N."/>
            <person name="Bryant D.A."/>
            <person name="Richardson P."/>
        </authorList>
    </citation>
    <scope>NUCLEOTIDE SEQUENCE [LARGE SCALE GENOMIC DNA]</scope>
    <source>
        <strain>RS-1</strain>
    </source>
</reference>
<comment type="function">
    <text evidence="1">One of the primary rRNA binding proteins, it binds directly to 16S rRNA where it nucleates assembly of the body of the 30S subunit.</text>
</comment>
<comment type="function">
    <text evidence="1">With S5 and S12 plays an important role in translational accuracy.</text>
</comment>
<comment type="subunit">
    <text evidence="1">Part of the 30S ribosomal subunit. Contacts protein S5. The interaction surface between S4 and S5 is involved in control of translational fidelity.</text>
</comment>
<comment type="similarity">
    <text evidence="1">Belongs to the universal ribosomal protein uS4 family.</text>
</comment>
<proteinExistence type="inferred from homology"/>
<keyword id="KW-0687">Ribonucleoprotein</keyword>
<keyword id="KW-0689">Ribosomal protein</keyword>
<keyword id="KW-0694">RNA-binding</keyword>
<keyword id="KW-0699">rRNA-binding</keyword>
<feature type="chain" id="PRO_0000322330" description="Small ribosomal subunit protein uS4">
    <location>
        <begin position="1"/>
        <end position="206"/>
    </location>
</feature>
<feature type="domain" description="S4 RNA-binding" evidence="1">
    <location>
        <begin position="94"/>
        <end position="157"/>
    </location>
</feature>
<evidence type="ECO:0000255" key="1">
    <source>
        <dbReference type="HAMAP-Rule" id="MF_01306"/>
    </source>
</evidence>
<evidence type="ECO:0000305" key="2"/>
<name>RS4_ROSS1</name>
<gene>
    <name evidence="1" type="primary">rpsD</name>
    <name type="ordered locus">RoseRS_1159</name>
</gene>
<organism>
    <name type="scientific">Roseiflexus sp. (strain RS-1)</name>
    <dbReference type="NCBI Taxonomy" id="357808"/>
    <lineage>
        <taxon>Bacteria</taxon>
        <taxon>Bacillati</taxon>
        <taxon>Chloroflexota</taxon>
        <taxon>Chloroflexia</taxon>
        <taxon>Chloroflexales</taxon>
        <taxon>Roseiflexineae</taxon>
        <taxon>Roseiflexaceae</taxon>
        <taxon>Roseiflexus</taxon>
    </lineage>
</organism>
<sequence length="206" mass="23643">MARYRGPVGKVSRRLGIGITDKGQRILAKRPFPPGQHGPSARRRQVSDYGLQLLEKQKARYVYGVLERQFRRIFEKAQRFPGETGAYLFILLERRLDNVVYRLGFATTRAQARQLVSHGHITVNGRKTNIPSYTVRVGETIAVRPESRRRTYFKNLIDSGALARHKTPDWLRLNPADLSGEVVAMPRREDAEPGINEQLIVEFYSR</sequence>
<accession>A5USG3</accession>